<sequence length="340" mass="36962">MPEWPPCLSVAPALVITMAAGKGAPLSPSAENRWRLSEPELGRGCKPVLLEKTNRLGPEAAVGRAGRDVGSAELALLVAPGKPRPGKPLPPKTRGEQRQSAFTELPRMKDRQVDAQAQEREHDDPTGQPGAPQLTQNIPRGPAGSKVFSVWPSGARSEQRSAFSKPTKRPAERPELTSVFPAGESADALGELSGLLNTTDLACWGRLSTPKLLVGDLWNLQALPQNAPLCSTFLGAPTLWLEHTQAQVPPPSSSSTTSWALLPPTLTSLGLSTQNWCAKCNLSFRLTSDLVFHMRSHHKKEHAGPDPHSQKRREEALACPVCQEHFRERHHLSRHMTSHS</sequence>
<gene>
    <name type="primary">ZNF488</name>
</gene>
<proteinExistence type="evidence at protein level"/>
<protein>
    <recommendedName>
        <fullName>Zinc finger protein 488</fullName>
    </recommendedName>
</protein>
<reference key="1">
    <citation type="journal article" date="2004" name="Nat. Genet.">
        <title>Complete sequencing and characterization of 21,243 full-length human cDNAs.</title>
        <authorList>
            <person name="Ota T."/>
            <person name="Suzuki Y."/>
            <person name="Nishikawa T."/>
            <person name="Otsuki T."/>
            <person name="Sugiyama T."/>
            <person name="Irie R."/>
            <person name="Wakamatsu A."/>
            <person name="Hayashi K."/>
            <person name="Sato H."/>
            <person name="Nagai K."/>
            <person name="Kimura K."/>
            <person name="Makita H."/>
            <person name="Sekine M."/>
            <person name="Obayashi M."/>
            <person name="Nishi T."/>
            <person name="Shibahara T."/>
            <person name="Tanaka T."/>
            <person name="Ishii S."/>
            <person name="Yamamoto J."/>
            <person name="Saito K."/>
            <person name="Kawai Y."/>
            <person name="Isono Y."/>
            <person name="Nakamura Y."/>
            <person name="Nagahari K."/>
            <person name="Murakami K."/>
            <person name="Yasuda T."/>
            <person name="Iwayanagi T."/>
            <person name="Wagatsuma M."/>
            <person name="Shiratori A."/>
            <person name="Sudo H."/>
            <person name="Hosoiri T."/>
            <person name="Kaku Y."/>
            <person name="Kodaira H."/>
            <person name="Kondo H."/>
            <person name="Sugawara M."/>
            <person name="Takahashi M."/>
            <person name="Kanda K."/>
            <person name="Yokoi T."/>
            <person name="Furuya T."/>
            <person name="Kikkawa E."/>
            <person name="Omura Y."/>
            <person name="Abe K."/>
            <person name="Kamihara K."/>
            <person name="Katsuta N."/>
            <person name="Sato K."/>
            <person name="Tanikawa M."/>
            <person name="Yamazaki M."/>
            <person name="Ninomiya K."/>
            <person name="Ishibashi T."/>
            <person name="Yamashita H."/>
            <person name="Murakawa K."/>
            <person name="Fujimori K."/>
            <person name="Tanai H."/>
            <person name="Kimata M."/>
            <person name="Watanabe M."/>
            <person name="Hiraoka S."/>
            <person name="Chiba Y."/>
            <person name="Ishida S."/>
            <person name="Ono Y."/>
            <person name="Takiguchi S."/>
            <person name="Watanabe S."/>
            <person name="Yosida M."/>
            <person name="Hotuta T."/>
            <person name="Kusano J."/>
            <person name="Kanehori K."/>
            <person name="Takahashi-Fujii A."/>
            <person name="Hara H."/>
            <person name="Tanase T.-O."/>
            <person name="Nomura Y."/>
            <person name="Togiya S."/>
            <person name="Komai F."/>
            <person name="Hara R."/>
            <person name="Takeuchi K."/>
            <person name="Arita M."/>
            <person name="Imose N."/>
            <person name="Musashino K."/>
            <person name="Yuuki H."/>
            <person name="Oshima A."/>
            <person name="Sasaki N."/>
            <person name="Aotsuka S."/>
            <person name="Yoshikawa Y."/>
            <person name="Matsunawa H."/>
            <person name="Ichihara T."/>
            <person name="Shiohata N."/>
            <person name="Sano S."/>
            <person name="Moriya S."/>
            <person name="Momiyama H."/>
            <person name="Satoh N."/>
            <person name="Takami S."/>
            <person name="Terashima Y."/>
            <person name="Suzuki O."/>
            <person name="Nakagawa S."/>
            <person name="Senoh A."/>
            <person name="Mizoguchi H."/>
            <person name="Goto Y."/>
            <person name="Shimizu F."/>
            <person name="Wakebe H."/>
            <person name="Hishigaki H."/>
            <person name="Watanabe T."/>
            <person name="Sugiyama A."/>
            <person name="Takemoto M."/>
            <person name="Kawakami B."/>
            <person name="Yamazaki M."/>
            <person name="Watanabe K."/>
            <person name="Kumagai A."/>
            <person name="Itakura S."/>
            <person name="Fukuzumi Y."/>
            <person name="Fujimori Y."/>
            <person name="Komiyama M."/>
            <person name="Tashiro H."/>
            <person name="Tanigami A."/>
            <person name="Fujiwara T."/>
            <person name="Ono T."/>
            <person name="Yamada K."/>
            <person name="Fujii Y."/>
            <person name="Ozaki K."/>
            <person name="Hirao M."/>
            <person name="Ohmori Y."/>
            <person name="Kawabata A."/>
            <person name="Hikiji T."/>
            <person name="Kobatake N."/>
            <person name="Inagaki H."/>
            <person name="Ikema Y."/>
            <person name="Okamoto S."/>
            <person name="Okitani R."/>
            <person name="Kawakami T."/>
            <person name="Noguchi S."/>
            <person name="Itoh T."/>
            <person name="Shigeta K."/>
            <person name="Senba T."/>
            <person name="Matsumura K."/>
            <person name="Nakajima Y."/>
            <person name="Mizuno T."/>
            <person name="Morinaga M."/>
            <person name="Sasaki M."/>
            <person name="Togashi T."/>
            <person name="Oyama M."/>
            <person name="Hata H."/>
            <person name="Watanabe M."/>
            <person name="Komatsu T."/>
            <person name="Mizushima-Sugano J."/>
            <person name="Satoh T."/>
            <person name="Shirai Y."/>
            <person name="Takahashi Y."/>
            <person name="Nakagawa K."/>
            <person name="Okumura K."/>
            <person name="Nagase T."/>
            <person name="Nomura N."/>
            <person name="Kikuchi H."/>
            <person name="Masuho Y."/>
            <person name="Yamashita R."/>
            <person name="Nakai K."/>
            <person name="Yada T."/>
            <person name="Nakamura Y."/>
            <person name="Ohara O."/>
            <person name="Isogai T."/>
            <person name="Sugano S."/>
        </authorList>
    </citation>
    <scope>NUCLEOTIDE SEQUENCE [LARGE SCALE MRNA] (ISOFORM 1)</scope>
    <source>
        <tissue>Brain</tissue>
    </source>
</reference>
<reference key="2">
    <citation type="journal article" date="2004" name="Nature">
        <title>The DNA sequence and comparative analysis of human chromosome 10.</title>
        <authorList>
            <person name="Deloukas P."/>
            <person name="Earthrowl M.E."/>
            <person name="Grafham D.V."/>
            <person name="Rubenfield M."/>
            <person name="French L."/>
            <person name="Steward C.A."/>
            <person name="Sims S.K."/>
            <person name="Jones M.C."/>
            <person name="Searle S."/>
            <person name="Scott C."/>
            <person name="Howe K."/>
            <person name="Hunt S.E."/>
            <person name="Andrews T.D."/>
            <person name="Gilbert J.G.R."/>
            <person name="Swarbreck D."/>
            <person name="Ashurst J.L."/>
            <person name="Taylor A."/>
            <person name="Battles J."/>
            <person name="Bird C.P."/>
            <person name="Ainscough R."/>
            <person name="Almeida J.P."/>
            <person name="Ashwell R.I.S."/>
            <person name="Ambrose K.D."/>
            <person name="Babbage A.K."/>
            <person name="Bagguley C.L."/>
            <person name="Bailey J."/>
            <person name="Banerjee R."/>
            <person name="Bates K."/>
            <person name="Beasley H."/>
            <person name="Bray-Allen S."/>
            <person name="Brown A.J."/>
            <person name="Brown J.Y."/>
            <person name="Burford D.C."/>
            <person name="Burrill W."/>
            <person name="Burton J."/>
            <person name="Cahill P."/>
            <person name="Camire D."/>
            <person name="Carter N.P."/>
            <person name="Chapman J.C."/>
            <person name="Clark S.Y."/>
            <person name="Clarke G."/>
            <person name="Clee C.M."/>
            <person name="Clegg S."/>
            <person name="Corby N."/>
            <person name="Coulson A."/>
            <person name="Dhami P."/>
            <person name="Dutta I."/>
            <person name="Dunn M."/>
            <person name="Faulkner L."/>
            <person name="Frankish A."/>
            <person name="Frankland J.A."/>
            <person name="Garner P."/>
            <person name="Garnett J."/>
            <person name="Gribble S."/>
            <person name="Griffiths C."/>
            <person name="Grocock R."/>
            <person name="Gustafson E."/>
            <person name="Hammond S."/>
            <person name="Harley J.L."/>
            <person name="Hart E."/>
            <person name="Heath P.D."/>
            <person name="Ho T.P."/>
            <person name="Hopkins B."/>
            <person name="Horne J."/>
            <person name="Howden P.J."/>
            <person name="Huckle E."/>
            <person name="Hynds C."/>
            <person name="Johnson C."/>
            <person name="Johnson D."/>
            <person name="Kana A."/>
            <person name="Kay M."/>
            <person name="Kimberley A.M."/>
            <person name="Kershaw J.K."/>
            <person name="Kokkinaki M."/>
            <person name="Laird G.K."/>
            <person name="Lawlor S."/>
            <person name="Lee H.M."/>
            <person name="Leongamornlert D.A."/>
            <person name="Laird G."/>
            <person name="Lloyd C."/>
            <person name="Lloyd D.M."/>
            <person name="Loveland J."/>
            <person name="Lovell J."/>
            <person name="McLaren S."/>
            <person name="McLay K.E."/>
            <person name="McMurray A."/>
            <person name="Mashreghi-Mohammadi M."/>
            <person name="Matthews L."/>
            <person name="Milne S."/>
            <person name="Nickerson T."/>
            <person name="Nguyen M."/>
            <person name="Overton-Larty E."/>
            <person name="Palmer S.A."/>
            <person name="Pearce A.V."/>
            <person name="Peck A.I."/>
            <person name="Pelan S."/>
            <person name="Phillimore B."/>
            <person name="Porter K."/>
            <person name="Rice C.M."/>
            <person name="Rogosin A."/>
            <person name="Ross M.T."/>
            <person name="Sarafidou T."/>
            <person name="Sehra H.K."/>
            <person name="Shownkeen R."/>
            <person name="Skuce C.D."/>
            <person name="Smith M."/>
            <person name="Standring L."/>
            <person name="Sycamore N."/>
            <person name="Tester J."/>
            <person name="Thorpe A."/>
            <person name="Torcasso W."/>
            <person name="Tracey A."/>
            <person name="Tromans A."/>
            <person name="Tsolas J."/>
            <person name="Wall M."/>
            <person name="Walsh J."/>
            <person name="Wang H."/>
            <person name="Weinstock K."/>
            <person name="West A.P."/>
            <person name="Willey D.L."/>
            <person name="Whitehead S.L."/>
            <person name="Wilming L."/>
            <person name="Wray P.W."/>
            <person name="Young L."/>
            <person name="Chen Y."/>
            <person name="Lovering R.C."/>
            <person name="Moschonas N.K."/>
            <person name="Siebert R."/>
            <person name="Fechtel K."/>
            <person name="Bentley D."/>
            <person name="Durbin R.M."/>
            <person name="Hubbard T."/>
            <person name="Doucette-Stamm L."/>
            <person name="Beck S."/>
            <person name="Smith D.R."/>
            <person name="Rogers J."/>
        </authorList>
    </citation>
    <scope>NUCLEOTIDE SEQUENCE [LARGE SCALE GENOMIC DNA]</scope>
</reference>
<reference key="3">
    <citation type="journal article" date="2004" name="Genome Res.">
        <title>The status, quality, and expansion of the NIH full-length cDNA project: the Mammalian Gene Collection (MGC).</title>
        <authorList>
            <consortium name="The MGC Project Team"/>
        </authorList>
    </citation>
    <scope>NUCLEOTIDE SEQUENCE [LARGE SCALE MRNA] (ISOFORMS 1 AND 2)</scope>
    <source>
        <tissue>Brain</tissue>
        <tissue>Pancreas</tissue>
    </source>
</reference>
<feature type="chain" id="PRO_0000047612" description="Zinc finger protein 488">
    <location>
        <begin position="1"/>
        <end position="340"/>
    </location>
</feature>
<feature type="zinc finger region" description="C2H2-type 1" evidence="2">
    <location>
        <begin position="275"/>
        <end position="302"/>
    </location>
</feature>
<feature type="zinc finger region" description="C2H2-type 2" evidence="2">
    <location>
        <begin position="317"/>
        <end position="339"/>
    </location>
</feature>
<feature type="region of interest" description="Important for transcriptional repression activity" evidence="1">
    <location>
        <begin position="72"/>
        <end position="187"/>
    </location>
</feature>
<feature type="region of interest" description="Disordered" evidence="4">
    <location>
        <begin position="77"/>
        <end position="180"/>
    </location>
</feature>
<feature type="short sequence motif" description="Nuclear localization signal" evidence="3">
    <location>
        <begin position="298"/>
        <end position="305"/>
    </location>
</feature>
<feature type="compositionally biased region" description="Pro residues" evidence="4">
    <location>
        <begin position="82"/>
        <end position="91"/>
    </location>
</feature>
<feature type="compositionally biased region" description="Basic and acidic residues" evidence="4">
    <location>
        <begin position="106"/>
        <end position="125"/>
    </location>
</feature>
<feature type="splice variant" id="VSP_055961" description="In isoform 2." evidence="5">
    <location>
        <begin position="1"/>
        <end position="107"/>
    </location>
</feature>
<feature type="sequence variant" id="VAR_033571" description="In dbSNP:rs35618062.">
    <original>A</original>
    <variation>V</variation>
    <location>
        <position position="72"/>
    </location>
</feature>
<feature type="sequence variant" id="VAR_033572" description="In dbSNP:rs12251609.">
    <original>P</original>
    <variation>L</variation>
    <location>
        <position position="106"/>
    </location>
</feature>
<feature type="sequence variant" id="VAR_033573" description="In dbSNP:rs3814160.">
    <original>P</original>
    <variation>S</variation>
    <location>
        <position position="249"/>
    </location>
</feature>
<dbReference type="EMBL" id="AK056666">
    <property type="protein sequence ID" value="BAB71246.1"/>
    <property type="molecule type" value="mRNA"/>
</dbReference>
<dbReference type="EMBL" id="AL731561">
    <property type="status" value="NOT_ANNOTATED_CDS"/>
    <property type="molecule type" value="Genomic_DNA"/>
</dbReference>
<dbReference type="EMBL" id="BC026895">
    <property type="protein sequence ID" value="AAH26895.1"/>
    <property type="molecule type" value="mRNA"/>
</dbReference>
<dbReference type="EMBL" id="BC051323">
    <property type="protein sequence ID" value="AAH51323.1"/>
    <property type="molecule type" value="mRNA"/>
</dbReference>
<dbReference type="CCDS" id="CCDS73120.1">
    <molecule id="Q96MN9-1"/>
</dbReference>
<dbReference type="RefSeq" id="NP_001333861.1">
    <molecule id="Q96MN9-1"/>
    <property type="nucleotide sequence ID" value="NM_001346932.2"/>
</dbReference>
<dbReference type="RefSeq" id="NP_001333862.1">
    <molecule id="Q96MN9-1"/>
    <property type="nucleotide sequence ID" value="NM_001346933.2"/>
</dbReference>
<dbReference type="RefSeq" id="NP_001333863.1">
    <molecule id="Q96MN9-1"/>
    <property type="nucleotide sequence ID" value="NM_001346934.2"/>
</dbReference>
<dbReference type="RefSeq" id="NP_001333864.1">
    <molecule id="Q96MN9-1"/>
    <property type="nucleotide sequence ID" value="NM_001346935.2"/>
</dbReference>
<dbReference type="RefSeq" id="NP_001333865.1">
    <molecule id="Q96MN9-1"/>
    <property type="nucleotide sequence ID" value="NM_001346936.2"/>
</dbReference>
<dbReference type="RefSeq" id="NP_694579.1">
    <molecule id="Q96MN9-1"/>
    <property type="nucleotide sequence ID" value="NM_153034.4"/>
</dbReference>
<dbReference type="RefSeq" id="XP_006717680.1">
    <molecule id="Q96MN9-1"/>
    <property type="nucleotide sequence ID" value="XM_006717617.4"/>
</dbReference>
<dbReference type="RefSeq" id="XP_011537546.1">
    <molecule id="Q96MN9-1"/>
    <property type="nucleotide sequence ID" value="XM_011539244.3"/>
</dbReference>
<dbReference type="RefSeq" id="XP_016871132.1">
    <molecule id="Q96MN9-1"/>
    <property type="nucleotide sequence ID" value="XM_017015643.2"/>
</dbReference>
<dbReference type="RefSeq" id="XP_047280521.1">
    <molecule id="Q96MN9-1"/>
    <property type="nucleotide sequence ID" value="XM_047424565.1"/>
</dbReference>
<dbReference type="RefSeq" id="XP_054220688.1">
    <molecule id="Q96MN9-1"/>
    <property type="nucleotide sequence ID" value="XM_054364713.1"/>
</dbReference>
<dbReference type="RefSeq" id="XP_054220689.1">
    <molecule id="Q96MN9-1"/>
    <property type="nucleotide sequence ID" value="XM_054364714.1"/>
</dbReference>
<dbReference type="RefSeq" id="XP_054220690.1">
    <molecule id="Q96MN9-1"/>
    <property type="nucleotide sequence ID" value="XM_054364715.1"/>
</dbReference>
<dbReference type="RefSeq" id="XP_054220691.1">
    <molecule id="Q96MN9-1"/>
    <property type="nucleotide sequence ID" value="XM_054364716.1"/>
</dbReference>
<dbReference type="BioGRID" id="125620">
    <property type="interactions" value="22"/>
</dbReference>
<dbReference type="FunCoup" id="Q96MN9">
    <property type="interactions" value="602"/>
</dbReference>
<dbReference type="IntAct" id="Q96MN9">
    <property type="interactions" value="48"/>
</dbReference>
<dbReference type="STRING" id="9606.ENSP00000462269"/>
<dbReference type="iPTMnet" id="Q96MN9"/>
<dbReference type="PhosphoSitePlus" id="Q96MN9"/>
<dbReference type="BioMuta" id="ZNF488"/>
<dbReference type="DMDM" id="68566223"/>
<dbReference type="MassIVE" id="Q96MN9"/>
<dbReference type="PaxDb" id="9606-ENSP00000462269"/>
<dbReference type="PeptideAtlas" id="Q96MN9"/>
<dbReference type="ProteomicsDB" id="77383">
    <molecule id="Q96MN9-1"/>
</dbReference>
<dbReference type="Antibodypedia" id="72957">
    <property type="antibodies" value="180 antibodies from 23 providers"/>
</dbReference>
<dbReference type="DNASU" id="118738"/>
<dbReference type="Ensembl" id="ENST00000585316.3">
    <molecule id="Q96MN9-1"/>
    <property type="protein sequence ID" value="ENSP00000462269.1"/>
    <property type="gene ID" value="ENSG00000265763.4"/>
</dbReference>
<dbReference type="Ensembl" id="ENST00000591025.1">
    <molecule id="Q96MN9-2"/>
    <property type="protein sequence ID" value="ENSP00000468133.1"/>
    <property type="gene ID" value="ENSG00000265763.4"/>
</dbReference>
<dbReference type="GeneID" id="118738"/>
<dbReference type="KEGG" id="hsa:118738"/>
<dbReference type="MANE-Select" id="ENST00000585316.3">
    <property type="protein sequence ID" value="ENSP00000462269.1"/>
    <property type="RefSeq nucleotide sequence ID" value="NM_153034.4"/>
    <property type="RefSeq protein sequence ID" value="NP_694579.1"/>
</dbReference>
<dbReference type="UCSC" id="uc001jex.3">
    <molecule id="Q96MN9-1"/>
    <property type="organism name" value="human"/>
</dbReference>
<dbReference type="AGR" id="HGNC:23535"/>
<dbReference type="CTD" id="118738"/>
<dbReference type="DisGeNET" id="118738"/>
<dbReference type="GeneCards" id="ZNF488"/>
<dbReference type="HGNC" id="HGNC:23535">
    <property type="gene designation" value="ZNF488"/>
</dbReference>
<dbReference type="HPA" id="ENSG00000265763">
    <property type="expression patterns" value="Group enriched (brain, intestine)"/>
</dbReference>
<dbReference type="neXtProt" id="NX_Q96MN9"/>
<dbReference type="OpenTargets" id="ENSG00000265763"/>
<dbReference type="PharmGKB" id="PA134917840"/>
<dbReference type="VEuPathDB" id="HostDB:ENSG00000265763"/>
<dbReference type="eggNOG" id="KOG1721">
    <property type="taxonomic scope" value="Eukaryota"/>
</dbReference>
<dbReference type="GeneTree" id="ENSGT00890000139463"/>
<dbReference type="HOGENOM" id="CLU_070344_0_0_1"/>
<dbReference type="InParanoid" id="Q96MN9"/>
<dbReference type="OMA" id="DFWNLQM"/>
<dbReference type="OrthoDB" id="5814089at2759"/>
<dbReference type="PAN-GO" id="Q96MN9">
    <property type="GO annotations" value="3 GO annotations based on evolutionary models"/>
</dbReference>
<dbReference type="PhylomeDB" id="Q96MN9"/>
<dbReference type="TreeFam" id="TF327090"/>
<dbReference type="PathwayCommons" id="Q96MN9"/>
<dbReference type="SignaLink" id="Q96MN9"/>
<dbReference type="BioGRID-ORCS" id="118738">
    <property type="hits" value="10 hits in 1154 CRISPR screens"/>
</dbReference>
<dbReference type="ChiTaRS" id="ZNF488">
    <property type="organism name" value="human"/>
</dbReference>
<dbReference type="GenomeRNAi" id="118738"/>
<dbReference type="Pharos" id="Q96MN9">
    <property type="development level" value="Tdark"/>
</dbReference>
<dbReference type="PRO" id="PR:Q96MN9"/>
<dbReference type="Proteomes" id="UP000005640">
    <property type="component" value="Chromosome 10"/>
</dbReference>
<dbReference type="RNAct" id="Q96MN9">
    <property type="molecule type" value="protein"/>
</dbReference>
<dbReference type="Bgee" id="ENSG00000265763">
    <property type="expression patterns" value="Expressed in C1 segment of cervical spinal cord and 101 other cell types or tissues"/>
</dbReference>
<dbReference type="GO" id="GO:0005634">
    <property type="term" value="C:nucleus"/>
    <property type="evidence" value="ECO:0000318"/>
    <property type="project" value="GO_Central"/>
</dbReference>
<dbReference type="GO" id="GO:0003677">
    <property type="term" value="F:DNA binding"/>
    <property type="evidence" value="ECO:0007669"/>
    <property type="project" value="UniProtKB-KW"/>
</dbReference>
<dbReference type="GO" id="GO:0008270">
    <property type="term" value="F:zinc ion binding"/>
    <property type="evidence" value="ECO:0007669"/>
    <property type="project" value="UniProtKB-KW"/>
</dbReference>
<dbReference type="GO" id="GO:0045892">
    <property type="term" value="P:negative regulation of DNA-templated transcription"/>
    <property type="evidence" value="ECO:0007669"/>
    <property type="project" value="Ensembl"/>
</dbReference>
<dbReference type="GO" id="GO:0014003">
    <property type="term" value="P:oligodendrocyte development"/>
    <property type="evidence" value="ECO:0000318"/>
    <property type="project" value="GO_Central"/>
</dbReference>
<dbReference type="GO" id="GO:0031643">
    <property type="term" value="P:positive regulation of myelination"/>
    <property type="evidence" value="ECO:0007669"/>
    <property type="project" value="Ensembl"/>
</dbReference>
<dbReference type="GO" id="GO:0048714">
    <property type="term" value="P:positive regulation of oligodendrocyte differentiation"/>
    <property type="evidence" value="ECO:0007669"/>
    <property type="project" value="Ensembl"/>
</dbReference>
<dbReference type="GO" id="GO:0006355">
    <property type="term" value="P:regulation of DNA-templated transcription"/>
    <property type="evidence" value="ECO:0000318"/>
    <property type="project" value="GO_Central"/>
</dbReference>
<dbReference type="Gene3D" id="3.30.160.60">
    <property type="entry name" value="Classic Zinc Finger"/>
    <property type="match status" value="1"/>
</dbReference>
<dbReference type="InterPro" id="IPR052296">
    <property type="entry name" value="TR-Histone_Methyltrans"/>
</dbReference>
<dbReference type="InterPro" id="IPR036236">
    <property type="entry name" value="Znf_C2H2_sf"/>
</dbReference>
<dbReference type="InterPro" id="IPR013087">
    <property type="entry name" value="Znf_C2H2_type"/>
</dbReference>
<dbReference type="PANTHER" id="PTHR16516">
    <property type="entry name" value="AGAP007109-PA"/>
    <property type="match status" value="1"/>
</dbReference>
<dbReference type="PANTHER" id="PTHR16516:SF5">
    <property type="entry name" value="ZINC FINGER PROTEIN 488"/>
    <property type="match status" value="1"/>
</dbReference>
<dbReference type="SMART" id="SM00355">
    <property type="entry name" value="ZnF_C2H2"/>
    <property type="match status" value="2"/>
</dbReference>
<dbReference type="SUPFAM" id="SSF57667">
    <property type="entry name" value="beta-beta-alpha zinc fingers"/>
    <property type="match status" value="1"/>
</dbReference>
<dbReference type="PROSITE" id="PS00028">
    <property type="entry name" value="ZINC_FINGER_C2H2_1"/>
    <property type="match status" value="2"/>
</dbReference>
<dbReference type="PROSITE" id="PS50157">
    <property type="entry name" value="ZINC_FINGER_C2H2_2"/>
    <property type="match status" value="2"/>
</dbReference>
<comment type="function">
    <text evidence="1">Transcriptional repressor. Plays a role in oligodendrocyte differentiation, together with OLIG2. Mediates Notch signaling-activated formation of oligodendrocyte precursors. Promotes differentiation of adult neural stem progenitor cells (NSPCs) into mature oligodendrocytes and contributes to remyelination following nerve injury.</text>
</comment>
<comment type="subunit">
    <text evidence="1">Interacts with OLIG2.</text>
</comment>
<comment type="interaction">
    <interactant intactId="EBI-948288">
        <id>Q96MN9</id>
    </interactant>
    <interactant intactId="EBI-930964">
        <id>P54253</id>
        <label>ATXN1</label>
    </interactant>
    <organismsDiffer>false</organismsDiffer>
    <experiments>9</experiments>
</comment>
<comment type="interaction">
    <interactant intactId="EBI-948288">
        <id>Q96MN9</id>
    </interactant>
    <interactant intactId="EBI-744695">
        <id>Q8N9N5</id>
        <label>BANP</label>
    </interactant>
    <organismsDiffer>false</organismsDiffer>
    <experiments>3</experiments>
</comment>
<comment type="interaction">
    <interactant intactId="EBI-948288">
        <id>Q96MN9</id>
    </interactant>
    <interactant intactId="EBI-7875264">
        <id>O75553</id>
        <label>DAB1</label>
    </interactant>
    <organismsDiffer>false</organismsDiffer>
    <experiments>3</experiments>
</comment>
<comment type="interaction">
    <interactant intactId="EBI-948288">
        <id>Q96MN9</id>
    </interactant>
    <interactant intactId="EBI-618309">
        <id>Q08379</id>
        <label>GOLGA2</label>
    </interactant>
    <organismsDiffer>false</organismsDiffer>
    <experiments>4</experiments>
</comment>
<comment type="interaction">
    <interactant intactId="EBI-948288">
        <id>Q96MN9</id>
    </interactant>
    <interactant intactId="EBI-10171697">
        <id>Q6A162</id>
        <label>KRT40</label>
    </interactant>
    <organismsDiffer>false</organismsDiffer>
    <experiments>3</experiments>
</comment>
<comment type="interaction">
    <interactant intactId="EBI-948288">
        <id>Q96MN9</id>
    </interactant>
    <interactant intactId="EBI-716006">
        <id>Q9Y5V3</id>
        <label>MAGED1</label>
    </interactant>
    <organismsDiffer>false</organismsDiffer>
    <experiments>3</experiments>
</comment>
<comment type="interaction">
    <interactant intactId="EBI-948288">
        <id>Q96MN9</id>
    </interactant>
    <interactant intactId="EBI-10172814">
        <id>P86479</id>
        <label>PRR20C</label>
    </interactant>
    <organismsDiffer>false</organismsDiffer>
    <experiments>3</experiments>
</comment>
<comment type="interaction">
    <interactant intactId="EBI-948288">
        <id>Q96MN9</id>
    </interactant>
    <interactant intactId="EBI-740322">
        <id>Q93062</id>
        <label>RBPMS</label>
    </interactant>
    <organismsDiffer>false</organismsDiffer>
    <experiments>4</experiments>
</comment>
<comment type="interaction">
    <interactant intactId="EBI-948288">
        <id>Q96MN9</id>
    </interactant>
    <interactant intactId="EBI-10182375">
        <id>Q9UFD9</id>
        <label>RIMBP3</label>
    </interactant>
    <organismsDiffer>false</organismsDiffer>
    <experiments>3</experiments>
</comment>
<comment type="interaction">
    <interactant intactId="EBI-948288">
        <id>Q96MN9</id>
    </interactant>
    <interactant intactId="EBI-355744">
        <id>Q12933</id>
        <label>TRAF2</label>
    </interactant>
    <organismsDiffer>false</organismsDiffer>
    <experiments>3</experiments>
</comment>
<comment type="interaction">
    <interactant intactId="EBI-25831733">
        <id>Q96MN9-2</id>
    </interactant>
    <interactant intactId="EBI-21535880">
        <id>Q92870-2</id>
        <label>APBB2</label>
    </interactant>
    <organismsDiffer>false</organismsDiffer>
    <experiments>3</experiments>
</comment>
<comment type="interaction">
    <interactant intactId="EBI-25831733">
        <id>Q96MN9-2</id>
    </interactant>
    <interactant intactId="EBI-930964">
        <id>P54253</id>
        <label>ATXN1</label>
    </interactant>
    <organismsDiffer>false</organismsDiffer>
    <experiments>6</experiments>
</comment>
<comment type="interaction">
    <interactant intactId="EBI-25831733">
        <id>Q96MN9-2</id>
    </interactant>
    <interactant intactId="EBI-10988864">
        <id>P46379-2</id>
        <label>BAG6</label>
    </interactant>
    <organismsDiffer>false</organismsDiffer>
    <experiments>3</experiments>
</comment>
<comment type="interaction">
    <interactant intactId="EBI-25831733">
        <id>Q96MN9-2</id>
    </interactant>
    <interactant intactId="EBI-21553822">
        <id>Q96A83-2</id>
        <label>COL26A1</label>
    </interactant>
    <organismsDiffer>false</organismsDiffer>
    <experiments>3</experiments>
</comment>
<comment type="interaction">
    <interactant intactId="EBI-25831733">
        <id>Q96MN9-2</id>
    </interactant>
    <interactant intactId="EBI-715104">
        <id>Q9NX09</id>
        <label>DDIT4</label>
    </interactant>
    <organismsDiffer>false</organismsDiffer>
    <experiments>3</experiments>
</comment>
<comment type="interaction">
    <interactant intactId="EBI-25831733">
        <id>Q96MN9-2</id>
    </interactant>
    <interactant intactId="EBI-10976677">
        <id>G5E9A7</id>
        <label>DMWD</label>
    </interactant>
    <organismsDiffer>false</organismsDiffer>
    <experiments>3</experiments>
</comment>
<comment type="interaction">
    <interactant intactId="EBI-25831733">
        <id>Q96MN9-2</id>
    </interactant>
    <interactant intactId="EBI-395638">
        <id>O14645</id>
        <label>DNALI1</label>
    </interactant>
    <organismsDiffer>false</organismsDiffer>
    <experiments>3</experiments>
</comment>
<comment type="interaction">
    <interactant intactId="EBI-25831733">
        <id>Q96MN9-2</id>
    </interactant>
    <interactant intactId="EBI-750300">
        <id>Q01658</id>
        <label>DR1</label>
    </interactant>
    <organismsDiffer>false</organismsDiffer>
    <experiments>3</experiments>
</comment>
<comment type="interaction">
    <interactant intactId="EBI-25831733">
        <id>Q96MN9-2</id>
    </interactant>
    <interactant intactId="EBI-744302">
        <id>P14136</id>
        <label>GFAP</label>
    </interactant>
    <organismsDiffer>false</organismsDiffer>
    <experiments>3</experiments>
</comment>
<comment type="interaction">
    <interactant intactId="EBI-25831733">
        <id>Q96MN9-2</id>
    </interactant>
    <interactant intactId="EBI-747754">
        <id>P28799</id>
        <label>GRN</label>
    </interactant>
    <organismsDiffer>false</organismsDiffer>
    <experiments>3</experiments>
</comment>
<comment type="interaction">
    <interactant intactId="EBI-25831733">
        <id>Q96MN9-2</id>
    </interactant>
    <interactant intactId="EBI-389564">
        <id>Q00403</id>
        <label>GTF2B</label>
    </interactant>
    <organismsDiffer>false</organismsDiffer>
    <experiments>3</experiments>
</comment>
<comment type="interaction">
    <interactant intactId="EBI-25831733">
        <id>Q96MN9-2</id>
    </interactant>
    <interactant intactId="EBI-1054873">
        <id>Q9Y5Q9</id>
        <label>GTF3C3</label>
    </interactant>
    <organismsDiffer>false</organismsDiffer>
    <experiments>3</experiments>
</comment>
<comment type="interaction">
    <interactant intactId="EBI-25831733">
        <id>Q96MN9-2</id>
    </interactant>
    <interactant intactId="EBI-352682">
        <id>P04792</id>
        <label>HSPB1</label>
    </interactant>
    <organismsDiffer>false</organismsDiffer>
    <experiments>3</experiments>
</comment>
<comment type="interaction">
    <interactant intactId="EBI-25831733">
        <id>Q96MN9-2</id>
    </interactant>
    <interactant intactId="EBI-10975473">
        <id>O60333-2</id>
        <label>KIF1B</label>
    </interactant>
    <organismsDiffer>false</organismsDiffer>
    <experiments>3</experiments>
</comment>
<comment type="interaction">
    <interactant intactId="EBI-25831733">
        <id>Q96MN9-2</id>
    </interactant>
    <interactant intactId="EBI-948266">
        <id>O14901</id>
        <label>KLF11</label>
    </interactant>
    <organismsDiffer>false</organismsDiffer>
    <experiments>3</experiments>
</comment>
<comment type="interaction">
    <interactant intactId="EBI-25831733">
        <id>Q96MN9-2</id>
    </interactant>
    <interactant intactId="EBI-351935">
        <id>P02545</id>
        <label>LMNA</label>
    </interactant>
    <organismsDiffer>false</organismsDiffer>
    <experiments>3</experiments>
</comment>
<comment type="interaction">
    <interactant intactId="EBI-25831733">
        <id>Q96MN9-2</id>
    </interactant>
    <interactant intactId="EBI-475646">
        <id>P07196</id>
        <label>NEFL</label>
    </interactant>
    <organismsDiffer>false</organismsDiffer>
    <experiments>3</experiments>
</comment>
<comment type="interaction">
    <interactant intactId="EBI-25831733">
        <id>Q96MN9-2</id>
    </interactant>
    <interactant intactId="EBI-2811583">
        <id>Q9BVL2</id>
        <label>NUP58</label>
    </interactant>
    <organismsDiffer>false</organismsDiffer>
    <experiments>3</experiments>
</comment>
<comment type="interaction">
    <interactant intactId="EBI-25831733">
        <id>Q96MN9-2</id>
    </interactant>
    <interactant intactId="EBI-748974">
        <id>Q96CV9</id>
        <label>OPTN</label>
    </interactant>
    <organismsDiffer>false</organismsDiffer>
    <experiments>3</experiments>
</comment>
<comment type="interaction">
    <interactant intactId="EBI-25831733">
        <id>Q96MN9-2</id>
    </interactant>
    <interactant intactId="EBI-602382">
        <id>Q16512</id>
        <label>PKN1</label>
    </interactant>
    <organismsDiffer>false</organismsDiffer>
    <experiments>3</experiments>
</comment>
<comment type="interaction">
    <interactant intactId="EBI-25831733">
        <id>Q96MN9-2</id>
    </interactant>
    <interactant intactId="EBI-50433196">
        <id>A0A6Q8PF08</id>
        <label>PMP22</label>
    </interactant>
    <organismsDiffer>false</organismsDiffer>
    <experiments>3</experiments>
</comment>
<comment type="interaction">
    <interactant intactId="EBI-25831733">
        <id>Q96MN9-2</id>
    </interactant>
    <interactant intactId="EBI-749195">
        <id>P60891</id>
        <label>PRPS1</label>
    </interactant>
    <organismsDiffer>false</organismsDiffer>
    <experiments>3</experiments>
</comment>
<comment type="interaction">
    <interactant intactId="EBI-25831733">
        <id>Q96MN9-2</id>
    </interactant>
    <interactant intactId="EBI-396669">
        <id>Q9Y3C5</id>
        <label>RNF11</label>
    </interactant>
    <organismsDiffer>false</organismsDiffer>
    <experiments>3</experiments>
</comment>
<comment type="interaction">
    <interactant intactId="EBI-25831733">
        <id>Q96MN9-2</id>
    </interactant>
    <interactant intactId="EBI-5235340">
        <id>Q7Z699</id>
        <label>SPRED1</label>
    </interactant>
    <organismsDiffer>false</organismsDiffer>
    <experiments>3</experiments>
</comment>
<comment type="interaction">
    <interactant intactId="EBI-25831733">
        <id>Q96MN9-2</id>
    </interactant>
    <interactant intactId="EBI-12806590">
        <id>Q86WV8</id>
        <label>TSC1</label>
    </interactant>
    <organismsDiffer>false</organismsDiffer>
    <experiments>3</experiments>
</comment>
<comment type="interaction">
    <interactant intactId="EBI-25831733">
        <id>Q96MN9-2</id>
    </interactant>
    <interactant intactId="EBI-711595">
        <id>Q13885</id>
        <label>TUBB2A</label>
    </interactant>
    <organismsDiffer>false</organismsDiffer>
    <experiments>3</experiments>
</comment>
<comment type="interaction">
    <interactant intactId="EBI-25831733">
        <id>Q96MN9-2</id>
    </interactant>
    <interactant intactId="EBI-1052596">
        <id>P31930</id>
        <label>UQCRC1</label>
    </interactant>
    <organismsDiffer>false</organismsDiffer>
    <experiments>3</experiments>
</comment>
<comment type="interaction">
    <interactant intactId="EBI-25831733">
        <id>Q96MN9-2</id>
    </interactant>
    <interactant intactId="EBI-357430">
        <id>P61758</id>
        <label>VBP1</label>
    </interactant>
    <organismsDiffer>false</organismsDiffer>
    <experiments>3</experiments>
</comment>
<comment type="interaction">
    <interactant intactId="EBI-25831733">
        <id>Q96MN9-2</id>
    </interactant>
    <interactant intactId="EBI-720609">
        <id>O76024</id>
        <label>WFS1</label>
    </interactant>
    <organismsDiffer>false</organismsDiffer>
    <experiments>3</experiments>
</comment>
<comment type="subcellular location">
    <subcellularLocation>
        <location evidence="1">Nucleus</location>
    </subcellularLocation>
</comment>
<comment type="alternative products">
    <event type="alternative splicing"/>
    <isoform>
        <id>Q96MN9-1</id>
        <name>1</name>
        <sequence type="displayed"/>
    </isoform>
    <isoform>
        <id>Q96MN9-2</id>
        <name>2</name>
        <sequence type="described" ref="VSP_055961"/>
    </isoform>
</comment>
<comment type="similarity">
    <text evidence="6">Belongs to the krueppel C2H2-type zinc-finger protein family.</text>
</comment>
<accession>Q96MN9</accession>
<accession>Q05CE0</accession>
<keyword id="KW-0025">Alternative splicing</keyword>
<keyword id="KW-0238">DNA-binding</keyword>
<keyword id="KW-0479">Metal-binding</keyword>
<keyword id="KW-0524">Neurogenesis</keyword>
<keyword id="KW-0539">Nucleus</keyword>
<keyword id="KW-1267">Proteomics identification</keyword>
<keyword id="KW-1185">Reference proteome</keyword>
<keyword id="KW-0677">Repeat</keyword>
<keyword id="KW-0678">Repressor</keyword>
<keyword id="KW-0804">Transcription</keyword>
<keyword id="KW-0805">Transcription regulation</keyword>
<keyword id="KW-0862">Zinc</keyword>
<keyword id="KW-0863">Zinc-finger</keyword>
<organism>
    <name type="scientific">Homo sapiens</name>
    <name type="common">Human</name>
    <dbReference type="NCBI Taxonomy" id="9606"/>
    <lineage>
        <taxon>Eukaryota</taxon>
        <taxon>Metazoa</taxon>
        <taxon>Chordata</taxon>
        <taxon>Craniata</taxon>
        <taxon>Vertebrata</taxon>
        <taxon>Euteleostomi</taxon>
        <taxon>Mammalia</taxon>
        <taxon>Eutheria</taxon>
        <taxon>Euarchontoglires</taxon>
        <taxon>Primates</taxon>
        <taxon>Haplorrhini</taxon>
        <taxon>Catarrhini</taxon>
        <taxon>Hominidae</taxon>
        <taxon>Homo</taxon>
    </lineage>
</organism>
<name>ZN488_HUMAN</name>
<evidence type="ECO:0000250" key="1">
    <source>
        <dbReference type="UniProtKB" id="Q5HZG9"/>
    </source>
</evidence>
<evidence type="ECO:0000255" key="2">
    <source>
        <dbReference type="PROSITE-ProRule" id="PRU00042"/>
    </source>
</evidence>
<evidence type="ECO:0000255" key="3">
    <source>
        <dbReference type="PROSITE-ProRule" id="PRU00768"/>
    </source>
</evidence>
<evidence type="ECO:0000256" key="4">
    <source>
        <dbReference type="SAM" id="MobiDB-lite"/>
    </source>
</evidence>
<evidence type="ECO:0000303" key="5">
    <source>
    </source>
</evidence>
<evidence type="ECO:0000305" key="6"/>